<feature type="chain" id="PRO_0000332444" description="UDP-N-acetylenolpyruvoylglucosamine reductase">
    <location>
        <begin position="1"/>
        <end position="304"/>
    </location>
</feature>
<feature type="domain" description="FAD-binding PCMH-type" evidence="1">
    <location>
        <begin position="33"/>
        <end position="213"/>
    </location>
</feature>
<feature type="active site" evidence="1">
    <location>
        <position position="177"/>
    </location>
</feature>
<feature type="active site" description="Proton donor" evidence="1">
    <location>
        <position position="227"/>
    </location>
</feature>
<feature type="active site" evidence="1">
    <location>
        <position position="297"/>
    </location>
</feature>
<dbReference type="EC" id="1.3.1.98" evidence="1"/>
<dbReference type="EMBL" id="CP000853">
    <property type="protein sequence ID" value="ABW18135.1"/>
    <property type="status" value="ALT_INIT"/>
    <property type="molecule type" value="Genomic_DNA"/>
</dbReference>
<dbReference type="RefSeq" id="WP_041719580.1">
    <property type="nucleotide sequence ID" value="NC_009922.1"/>
</dbReference>
<dbReference type="SMR" id="A8MLW8"/>
<dbReference type="STRING" id="350688.Clos_0573"/>
<dbReference type="KEGG" id="aoe:Clos_0573"/>
<dbReference type="eggNOG" id="COG0812">
    <property type="taxonomic scope" value="Bacteria"/>
</dbReference>
<dbReference type="HOGENOM" id="CLU_035304_1_1_9"/>
<dbReference type="UniPathway" id="UPA00219"/>
<dbReference type="Proteomes" id="UP000000269">
    <property type="component" value="Chromosome"/>
</dbReference>
<dbReference type="GO" id="GO:0005829">
    <property type="term" value="C:cytosol"/>
    <property type="evidence" value="ECO:0007669"/>
    <property type="project" value="TreeGrafter"/>
</dbReference>
<dbReference type="GO" id="GO:0071949">
    <property type="term" value="F:FAD binding"/>
    <property type="evidence" value="ECO:0007669"/>
    <property type="project" value="InterPro"/>
</dbReference>
<dbReference type="GO" id="GO:0008762">
    <property type="term" value="F:UDP-N-acetylmuramate dehydrogenase activity"/>
    <property type="evidence" value="ECO:0007669"/>
    <property type="project" value="UniProtKB-UniRule"/>
</dbReference>
<dbReference type="GO" id="GO:0051301">
    <property type="term" value="P:cell division"/>
    <property type="evidence" value="ECO:0007669"/>
    <property type="project" value="UniProtKB-KW"/>
</dbReference>
<dbReference type="GO" id="GO:0071555">
    <property type="term" value="P:cell wall organization"/>
    <property type="evidence" value="ECO:0007669"/>
    <property type="project" value="UniProtKB-KW"/>
</dbReference>
<dbReference type="GO" id="GO:0009252">
    <property type="term" value="P:peptidoglycan biosynthetic process"/>
    <property type="evidence" value="ECO:0007669"/>
    <property type="project" value="UniProtKB-UniRule"/>
</dbReference>
<dbReference type="GO" id="GO:0008360">
    <property type="term" value="P:regulation of cell shape"/>
    <property type="evidence" value="ECO:0007669"/>
    <property type="project" value="UniProtKB-KW"/>
</dbReference>
<dbReference type="Gene3D" id="3.30.465.10">
    <property type="match status" value="1"/>
</dbReference>
<dbReference type="Gene3D" id="3.90.78.10">
    <property type="entry name" value="UDP-N-acetylenolpyruvoylglucosamine reductase, C-terminal domain"/>
    <property type="match status" value="1"/>
</dbReference>
<dbReference type="Gene3D" id="3.30.43.10">
    <property type="entry name" value="Uridine Diphospho-n-acetylenolpyruvylglucosamine Reductase, domain 2"/>
    <property type="match status" value="1"/>
</dbReference>
<dbReference type="HAMAP" id="MF_00037">
    <property type="entry name" value="MurB"/>
    <property type="match status" value="1"/>
</dbReference>
<dbReference type="InterPro" id="IPR016166">
    <property type="entry name" value="FAD-bd_PCMH"/>
</dbReference>
<dbReference type="InterPro" id="IPR036318">
    <property type="entry name" value="FAD-bd_PCMH-like_sf"/>
</dbReference>
<dbReference type="InterPro" id="IPR016167">
    <property type="entry name" value="FAD-bd_PCMH_sub1"/>
</dbReference>
<dbReference type="InterPro" id="IPR016169">
    <property type="entry name" value="FAD-bd_PCMH_sub2"/>
</dbReference>
<dbReference type="InterPro" id="IPR003170">
    <property type="entry name" value="MurB"/>
</dbReference>
<dbReference type="InterPro" id="IPR011601">
    <property type="entry name" value="MurB_C"/>
</dbReference>
<dbReference type="InterPro" id="IPR036635">
    <property type="entry name" value="MurB_C_sf"/>
</dbReference>
<dbReference type="InterPro" id="IPR006094">
    <property type="entry name" value="Oxid_FAD_bind_N"/>
</dbReference>
<dbReference type="NCBIfam" id="TIGR00179">
    <property type="entry name" value="murB"/>
    <property type="match status" value="1"/>
</dbReference>
<dbReference type="NCBIfam" id="NF010480">
    <property type="entry name" value="PRK13905.1"/>
    <property type="match status" value="1"/>
</dbReference>
<dbReference type="PANTHER" id="PTHR21071">
    <property type="entry name" value="UDP-N-ACETYLENOLPYRUVOYLGLUCOSAMINE REDUCTASE"/>
    <property type="match status" value="1"/>
</dbReference>
<dbReference type="PANTHER" id="PTHR21071:SF4">
    <property type="entry name" value="UDP-N-ACETYLENOLPYRUVOYLGLUCOSAMINE REDUCTASE"/>
    <property type="match status" value="1"/>
</dbReference>
<dbReference type="Pfam" id="PF01565">
    <property type="entry name" value="FAD_binding_4"/>
    <property type="match status" value="1"/>
</dbReference>
<dbReference type="Pfam" id="PF02873">
    <property type="entry name" value="MurB_C"/>
    <property type="match status" value="1"/>
</dbReference>
<dbReference type="SUPFAM" id="SSF56176">
    <property type="entry name" value="FAD-binding/transporter-associated domain-like"/>
    <property type="match status" value="1"/>
</dbReference>
<dbReference type="SUPFAM" id="SSF56194">
    <property type="entry name" value="Uridine diphospho-N-Acetylenolpyruvylglucosamine reductase, MurB, C-terminal domain"/>
    <property type="match status" value="1"/>
</dbReference>
<dbReference type="PROSITE" id="PS51387">
    <property type="entry name" value="FAD_PCMH"/>
    <property type="match status" value="1"/>
</dbReference>
<sequence>MDKLKAYKALTKVIPQDLVLLDEPMKNHTSFKIGGPADIMVIPETIDQLKSAIKLSKENQMPYFIIGNGSNLIVRDKGMRCIVIKIAEQFSKVSFQGNTVIAEAGILLSKLSKKIMAESLKGFEFASGIPGTLGGAITMNAGAYGGEMKDVVKGAHLLNDNGEVRYFTLEELELGYRTSIIQKQGYIALDVELALEKGDYQEILEITRDLTERRTTKQPLHLPSAGSVFKRPEGYFAGKLIQDSGLKGQRVGGAQVSELHSGFIVNVGDATAKDVLDLIQLIKDRVYETFHVQLETEVRIVGEE</sequence>
<keyword id="KW-0131">Cell cycle</keyword>
<keyword id="KW-0132">Cell division</keyword>
<keyword id="KW-0133">Cell shape</keyword>
<keyword id="KW-0961">Cell wall biogenesis/degradation</keyword>
<keyword id="KW-0963">Cytoplasm</keyword>
<keyword id="KW-0274">FAD</keyword>
<keyword id="KW-0285">Flavoprotein</keyword>
<keyword id="KW-0521">NADP</keyword>
<keyword id="KW-0560">Oxidoreductase</keyword>
<keyword id="KW-0573">Peptidoglycan synthesis</keyword>
<keyword id="KW-1185">Reference proteome</keyword>
<proteinExistence type="inferred from homology"/>
<accession>A8MLW8</accession>
<organism>
    <name type="scientific">Alkaliphilus oremlandii (strain OhILAs)</name>
    <name type="common">Clostridium oremlandii (strain OhILAs)</name>
    <dbReference type="NCBI Taxonomy" id="350688"/>
    <lineage>
        <taxon>Bacteria</taxon>
        <taxon>Bacillati</taxon>
        <taxon>Bacillota</taxon>
        <taxon>Clostridia</taxon>
        <taxon>Peptostreptococcales</taxon>
        <taxon>Natronincolaceae</taxon>
        <taxon>Alkaliphilus</taxon>
    </lineage>
</organism>
<gene>
    <name evidence="1" type="primary">murB</name>
    <name type="ordered locus">Clos_0573</name>
</gene>
<evidence type="ECO:0000255" key="1">
    <source>
        <dbReference type="HAMAP-Rule" id="MF_00037"/>
    </source>
</evidence>
<evidence type="ECO:0000305" key="2"/>
<name>MURB_ALKOO</name>
<reference key="1">
    <citation type="submission" date="2007-10" db="EMBL/GenBank/DDBJ databases">
        <title>Complete genome of Alkaliphilus oremlandii OhILAs.</title>
        <authorList>
            <person name="Copeland A."/>
            <person name="Lucas S."/>
            <person name="Lapidus A."/>
            <person name="Barry K."/>
            <person name="Detter J.C."/>
            <person name="Glavina del Rio T."/>
            <person name="Hammon N."/>
            <person name="Israni S."/>
            <person name="Dalin E."/>
            <person name="Tice H."/>
            <person name="Pitluck S."/>
            <person name="Chain P."/>
            <person name="Malfatti S."/>
            <person name="Shin M."/>
            <person name="Vergez L."/>
            <person name="Schmutz J."/>
            <person name="Larimer F."/>
            <person name="Land M."/>
            <person name="Hauser L."/>
            <person name="Kyrpides N."/>
            <person name="Mikhailova N."/>
            <person name="Stolz J.F."/>
            <person name="Dawson A."/>
            <person name="Fisher E."/>
            <person name="Crable B."/>
            <person name="Perera E."/>
            <person name="Lisak J."/>
            <person name="Ranganathan M."/>
            <person name="Basu P."/>
            <person name="Richardson P."/>
        </authorList>
    </citation>
    <scope>NUCLEOTIDE SEQUENCE [LARGE SCALE GENOMIC DNA]</scope>
    <source>
        <strain>OhILAs</strain>
    </source>
</reference>
<protein>
    <recommendedName>
        <fullName evidence="1">UDP-N-acetylenolpyruvoylglucosamine reductase</fullName>
        <ecNumber evidence="1">1.3.1.98</ecNumber>
    </recommendedName>
    <alternativeName>
        <fullName evidence="1">UDP-N-acetylmuramate dehydrogenase</fullName>
    </alternativeName>
</protein>
<comment type="function">
    <text evidence="1">Cell wall formation.</text>
</comment>
<comment type="catalytic activity">
    <reaction evidence="1">
        <text>UDP-N-acetyl-alpha-D-muramate + NADP(+) = UDP-N-acetyl-3-O-(1-carboxyvinyl)-alpha-D-glucosamine + NADPH + H(+)</text>
        <dbReference type="Rhea" id="RHEA:12248"/>
        <dbReference type="ChEBI" id="CHEBI:15378"/>
        <dbReference type="ChEBI" id="CHEBI:57783"/>
        <dbReference type="ChEBI" id="CHEBI:58349"/>
        <dbReference type="ChEBI" id="CHEBI:68483"/>
        <dbReference type="ChEBI" id="CHEBI:70757"/>
        <dbReference type="EC" id="1.3.1.98"/>
    </reaction>
</comment>
<comment type="cofactor">
    <cofactor evidence="1">
        <name>FAD</name>
        <dbReference type="ChEBI" id="CHEBI:57692"/>
    </cofactor>
</comment>
<comment type="pathway">
    <text evidence="1">Cell wall biogenesis; peptidoglycan biosynthesis.</text>
</comment>
<comment type="subcellular location">
    <subcellularLocation>
        <location evidence="1">Cytoplasm</location>
    </subcellularLocation>
</comment>
<comment type="similarity">
    <text evidence="1">Belongs to the MurB family.</text>
</comment>
<comment type="sequence caution" evidence="2">
    <conflict type="erroneous initiation">
        <sequence resource="EMBL-CDS" id="ABW18135"/>
    </conflict>
</comment>